<organism>
    <name type="scientific">Pseudomonas savastanoi pv. phaseolicola (strain 1448A / Race 6)</name>
    <name type="common">Pseudomonas syringae pv. phaseolicola (strain 1448A / Race 6)</name>
    <dbReference type="NCBI Taxonomy" id="264730"/>
    <lineage>
        <taxon>Bacteria</taxon>
        <taxon>Pseudomonadati</taxon>
        <taxon>Pseudomonadota</taxon>
        <taxon>Gammaproteobacteria</taxon>
        <taxon>Pseudomonadales</taxon>
        <taxon>Pseudomonadaceae</taxon>
        <taxon>Pseudomonas</taxon>
    </lineage>
</organism>
<dbReference type="EC" id="2.5.1.141" evidence="1"/>
<dbReference type="EMBL" id="CP000058">
    <property type="protein sequence ID" value="AAZ35358.1"/>
    <property type="molecule type" value="Genomic_DNA"/>
</dbReference>
<dbReference type="RefSeq" id="WP_002552346.1">
    <property type="nucleotide sequence ID" value="NC_005773.3"/>
</dbReference>
<dbReference type="SMR" id="Q48M92"/>
<dbReference type="GeneID" id="69858202"/>
<dbReference type="KEGG" id="psp:PSPPH_1214"/>
<dbReference type="eggNOG" id="COG0109">
    <property type="taxonomic scope" value="Bacteria"/>
</dbReference>
<dbReference type="HOGENOM" id="CLU_029631_0_0_6"/>
<dbReference type="UniPathway" id="UPA00834">
    <property type="reaction ID" value="UER00712"/>
</dbReference>
<dbReference type="Proteomes" id="UP000000551">
    <property type="component" value="Chromosome"/>
</dbReference>
<dbReference type="GO" id="GO:0005886">
    <property type="term" value="C:plasma membrane"/>
    <property type="evidence" value="ECO:0007669"/>
    <property type="project" value="UniProtKB-SubCell"/>
</dbReference>
<dbReference type="GO" id="GO:0008495">
    <property type="term" value="F:protoheme IX farnesyltransferase activity"/>
    <property type="evidence" value="ECO:0007669"/>
    <property type="project" value="UniProtKB-UniRule"/>
</dbReference>
<dbReference type="GO" id="GO:0048034">
    <property type="term" value="P:heme O biosynthetic process"/>
    <property type="evidence" value="ECO:0007669"/>
    <property type="project" value="UniProtKB-UniRule"/>
</dbReference>
<dbReference type="CDD" id="cd13957">
    <property type="entry name" value="PT_UbiA_Cox10"/>
    <property type="match status" value="1"/>
</dbReference>
<dbReference type="FunFam" id="1.10.357.140:FF:000001">
    <property type="entry name" value="Protoheme IX farnesyltransferase"/>
    <property type="match status" value="1"/>
</dbReference>
<dbReference type="Gene3D" id="1.10.357.140">
    <property type="entry name" value="UbiA prenyltransferase"/>
    <property type="match status" value="1"/>
</dbReference>
<dbReference type="HAMAP" id="MF_00154">
    <property type="entry name" value="CyoE_CtaB"/>
    <property type="match status" value="1"/>
</dbReference>
<dbReference type="InterPro" id="IPR006369">
    <property type="entry name" value="Protohaem_IX_farnesylTrfase"/>
</dbReference>
<dbReference type="InterPro" id="IPR000537">
    <property type="entry name" value="UbiA_prenyltransferase"/>
</dbReference>
<dbReference type="InterPro" id="IPR030470">
    <property type="entry name" value="UbiA_prenylTrfase_CS"/>
</dbReference>
<dbReference type="InterPro" id="IPR044878">
    <property type="entry name" value="UbiA_sf"/>
</dbReference>
<dbReference type="NCBIfam" id="TIGR01473">
    <property type="entry name" value="cyoE_ctaB"/>
    <property type="match status" value="1"/>
</dbReference>
<dbReference type="NCBIfam" id="NF003348">
    <property type="entry name" value="PRK04375.1-1"/>
    <property type="match status" value="1"/>
</dbReference>
<dbReference type="PANTHER" id="PTHR43448">
    <property type="entry name" value="PROTOHEME IX FARNESYLTRANSFERASE, MITOCHONDRIAL"/>
    <property type="match status" value="1"/>
</dbReference>
<dbReference type="PANTHER" id="PTHR43448:SF2">
    <property type="entry name" value="PROTOHEME IX FARNESYLTRANSFERASE, MITOCHONDRIAL"/>
    <property type="match status" value="1"/>
</dbReference>
<dbReference type="Pfam" id="PF01040">
    <property type="entry name" value="UbiA"/>
    <property type="match status" value="1"/>
</dbReference>
<dbReference type="PROSITE" id="PS00943">
    <property type="entry name" value="UBIA"/>
    <property type="match status" value="1"/>
</dbReference>
<sequence length="295" mass="32372">MSLKHFIQITKPGIIFGNVLSVAGGFFLASKGNIDFGVFLAAVIGTSLVVASGCVFNNCIDRDIDQRMERTRNRVLVQGLVSLKLALLYATILGVAGVALLYTEANPLAALFAVIGFVIYVGLYSLYLKRRSVHGTLVGSLSGAMPPVIGYCAVTNSFDFAALTLLVMFSLWQMPHSYAIAIFRFNDYRAAKIPVLPVKRGILVTKRHIMLYILAFLVATLMLTVGGYAGLNYLAVAAGMGMYWLYMAWKGYKAVDDTVWARKLFVFSIFTITALSVMMSVDFQVTKELLVTYAF</sequence>
<reference key="1">
    <citation type="journal article" date="2005" name="J. Bacteriol.">
        <title>Whole-genome sequence analysis of Pseudomonas syringae pv. phaseolicola 1448A reveals divergence among pathovars in genes involved in virulence and transposition.</title>
        <authorList>
            <person name="Joardar V."/>
            <person name="Lindeberg M."/>
            <person name="Jackson R.W."/>
            <person name="Selengut J."/>
            <person name="Dodson R."/>
            <person name="Brinkac L.M."/>
            <person name="Daugherty S.C."/>
            <person name="DeBoy R.T."/>
            <person name="Durkin A.S."/>
            <person name="Gwinn Giglio M."/>
            <person name="Madupu R."/>
            <person name="Nelson W.C."/>
            <person name="Rosovitz M.J."/>
            <person name="Sullivan S.A."/>
            <person name="Crabtree J."/>
            <person name="Creasy T."/>
            <person name="Davidsen T.M."/>
            <person name="Haft D.H."/>
            <person name="Zafar N."/>
            <person name="Zhou L."/>
            <person name="Halpin R."/>
            <person name="Holley T."/>
            <person name="Khouri H.M."/>
            <person name="Feldblyum T.V."/>
            <person name="White O."/>
            <person name="Fraser C.M."/>
            <person name="Chatterjee A.K."/>
            <person name="Cartinhour S."/>
            <person name="Schneider D."/>
            <person name="Mansfield J.W."/>
            <person name="Collmer A."/>
            <person name="Buell R."/>
        </authorList>
    </citation>
    <scope>NUCLEOTIDE SEQUENCE [LARGE SCALE GENOMIC DNA]</scope>
    <source>
        <strain>1448A / Race 6</strain>
    </source>
</reference>
<proteinExistence type="inferred from homology"/>
<keyword id="KW-0997">Cell inner membrane</keyword>
<keyword id="KW-1003">Cell membrane</keyword>
<keyword id="KW-0350">Heme biosynthesis</keyword>
<keyword id="KW-0472">Membrane</keyword>
<keyword id="KW-0808">Transferase</keyword>
<keyword id="KW-0812">Transmembrane</keyword>
<keyword id="KW-1133">Transmembrane helix</keyword>
<evidence type="ECO:0000255" key="1">
    <source>
        <dbReference type="HAMAP-Rule" id="MF_00154"/>
    </source>
</evidence>
<protein>
    <recommendedName>
        <fullName evidence="1">Protoheme IX farnesyltransferase</fullName>
        <ecNumber evidence="1">2.5.1.141</ecNumber>
    </recommendedName>
    <alternativeName>
        <fullName evidence="1">Heme B farnesyltransferase</fullName>
    </alternativeName>
    <alternativeName>
        <fullName evidence="1">Heme O synthase</fullName>
    </alternativeName>
</protein>
<name>CYOE_PSE14</name>
<feature type="chain" id="PRO_0000326930" description="Protoheme IX farnesyltransferase">
    <location>
        <begin position="1"/>
        <end position="295"/>
    </location>
</feature>
<feature type="transmembrane region" description="Helical" evidence="1">
    <location>
        <begin position="9"/>
        <end position="29"/>
    </location>
</feature>
<feature type="transmembrane region" description="Helical" evidence="1">
    <location>
        <begin position="36"/>
        <end position="56"/>
    </location>
</feature>
<feature type="transmembrane region" description="Helical" evidence="1">
    <location>
        <begin position="80"/>
        <end position="100"/>
    </location>
</feature>
<feature type="transmembrane region" description="Helical" evidence="1">
    <location>
        <begin position="108"/>
        <end position="128"/>
    </location>
</feature>
<feature type="transmembrane region" description="Helical" evidence="1">
    <location>
        <begin position="135"/>
        <end position="155"/>
    </location>
</feature>
<feature type="transmembrane region" description="Helical" evidence="1">
    <location>
        <begin position="163"/>
        <end position="183"/>
    </location>
</feature>
<feature type="transmembrane region" description="Helical" evidence="1">
    <location>
        <begin position="209"/>
        <end position="229"/>
    </location>
</feature>
<feature type="transmembrane region" description="Helical" evidence="1">
    <location>
        <begin position="230"/>
        <end position="250"/>
    </location>
</feature>
<feature type="transmembrane region" description="Helical" evidence="1">
    <location>
        <begin position="265"/>
        <end position="285"/>
    </location>
</feature>
<comment type="function">
    <text evidence="1">Converts heme B (protoheme IX) to heme O by substitution of the vinyl group on carbon 2 of heme B porphyrin ring with a hydroxyethyl farnesyl side group.</text>
</comment>
<comment type="catalytic activity">
    <reaction evidence="1">
        <text>heme b + (2E,6E)-farnesyl diphosphate + H2O = Fe(II)-heme o + diphosphate</text>
        <dbReference type="Rhea" id="RHEA:28070"/>
        <dbReference type="ChEBI" id="CHEBI:15377"/>
        <dbReference type="ChEBI" id="CHEBI:33019"/>
        <dbReference type="ChEBI" id="CHEBI:60344"/>
        <dbReference type="ChEBI" id="CHEBI:60530"/>
        <dbReference type="ChEBI" id="CHEBI:175763"/>
        <dbReference type="EC" id="2.5.1.141"/>
    </reaction>
</comment>
<comment type="pathway">
    <text evidence="1">Porphyrin-containing compound metabolism; heme O biosynthesis; heme O from protoheme: step 1/1.</text>
</comment>
<comment type="subcellular location">
    <subcellularLocation>
        <location evidence="1">Cell inner membrane</location>
        <topology evidence="1">Multi-pass membrane protein</topology>
    </subcellularLocation>
</comment>
<comment type="miscellaneous">
    <text evidence="1">Carbon 2 of the heme B porphyrin ring is defined according to the Fischer nomenclature.</text>
</comment>
<comment type="similarity">
    <text evidence="1">Belongs to the UbiA prenyltransferase family. Protoheme IX farnesyltransferase subfamily.</text>
</comment>
<accession>Q48M92</accession>
<gene>
    <name evidence="1" type="primary">cyoE</name>
    <name type="ordered locus">PSPPH_1214</name>
</gene>